<feature type="chain" id="PRO_0000233290" description="Catechol O-methyltransferase domain-containing protein 1">
    <location>
        <begin position="1"/>
        <end position="262"/>
    </location>
</feature>
<feature type="transmembrane region" description="Helical; Signal-anchor for type II membrane protein" evidence="2">
    <location>
        <begin position="12"/>
        <end position="32"/>
    </location>
</feature>
<feature type="binding site" evidence="3">
    <location>
        <position position="108"/>
    </location>
    <ligand>
        <name>S-adenosyl-L-methionine</name>
        <dbReference type="ChEBI" id="CHEBI:59789"/>
    </ligand>
</feature>
<feature type="binding site" evidence="3">
    <location>
        <begin position="110"/>
        <end position="111"/>
    </location>
    <ligand>
        <name>S-adenosyl-L-methionine</name>
        <dbReference type="ChEBI" id="CHEBI:59789"/>
    </ligand>
</feature>
<feature type="binding site" evidence="3">
    <location>
        <position position="116"/>
    </location>
    <ligand>
        <name>S-adenosyl-L-methionine</name>
        <dbReference type="ChEBI" id="CHEBI:59789"/>
    </ligand>
</feature>
<feature type="binding site" evidence="3">
    <location>
        <position position="134"/>
    </location>
    <ligand>
        <name>S-adenosyl-L-methionine</name>
        <dbReference type="ChEBI" id="CHEBI:59789"/>
    </ligand>
</feature>
<feature type="binding site" evidence="3">
    <location>
        <position position="135"/>
    </location>
    <ligand>
        <name>S-adenosyl-L-methionine</name>
        <dbReference type="ChEBI" id="CHEBI:59789"/>
    </ligand>
</feature>
<feature type="binding site" evidence="3">
    <location>
        <position position="163"/>
    </location>
    <ligand>
        <name>S-adenosyl-L-methionine</name>
        <dbReference type="ChEBI" id="CHEBI:59789"/>
    </ligand>
</feature>
<feature type="binding site" evidence="3">
    <location>
        <position position="185"/>
    </location>
    <ligand>
        <name>S-adenosyl-L-methionine</name>
        <dbReference type="ChEBI" id="CHEBI:59789"/>
    </ligand>
</feature>
<feature type="binding site" evidence="3">
    <location>
        <position position="187"/>
    </location>
    <ligand>
        <name>S-adenosyl-L-methionine</name>
        <dbReference type="ChEBI" id="CHEBI:59789"/>
    </ligand>
</feature>
<feature type="binding site" evidence="3">
    <location>
        <position position="194"/>
    </location>
    <ligand>
        <name>S-adenosyl-L-methionine</name>
        <dbReference type="ChEBI" id="CHEBI:59789"/>
    </ligand>
</feature>
<reference key="1">
    <citation type="submission" date="2005-07" db="EMBL/GenBank/DDBJ databases">
        <title>Cloning of mouse full open reading frames in Gateway(R) system entry vector (pDONR201).</title>
        <authorList>
            <person name="Ebert L."/>
            <person name="Muenstermann E."/>
            <person name="Schatten R."/>
            <person name="Henze S."/>
            <person name="Bohn E."/>
            <person name="Mollenhauer J."/>
            <person name="Wiemann S."/>
            <person name="Schick M."/>
            <person name="Korn B."/>
        </authorList>
    </citation>
    <scope>NUCLEOTIDE SEQUENCE [LARGE SCALE MRNA]</scope>
</reference>
<reference key="2">
    <citation type="journal article" date="2005" name="Science">
        <title>The transcriptional landscape of the mammalian genome.</title>
        <authorList>
            <person name="Carninci P."/>
            <person name="Kasukawa T."/>
            <person name="Katayama S."/>
            <person name="Gough J."/>
            <person name="Frith M.C."/>
            <person name="Maeda N."/>
            <person name="Oyama R."/>
            <person name="Ravasi T."/>
            <person name="Lenhard B."/>
            <person name="Wells C."/>
            <person name="Kodzius R."/>
            <person name="Shimokawa K."/>
            <person name="Bajic V.B."/>
            <person name="Brenner S.E."/>
            <person name="Batalov S."/>
            <person name="Forrest A.R."/>
            <person name="Zavolan M."/>
            <person name="Davis M.J."/>
            <person name="Wilming L.G."/>
            <person name="Aidinis V."/>
            <person name="Allen J.E."/>
            <person name="Ambesi-Impiombato A."/>
            <person name="Apweiler R."/>
            <person name="Aturaliya R.N."/>
            <person name="Bailey T.L."/>
            <person name="Bansal M."/>
            <person name="Baxter L."/>
            <person name="Beisel K.W."/>
            <person name="Bersano T."/>
            <person name="Bono H."/>
            <person name="Chalk A.M."/>
            <person name="Chiu K.P."/>
            <person name="Choudhary V."/>
            <person name="Christoffels A."/>
            <person name="Clutterbuck D.R."/>
            <person name="Crowe M.L."/>
            <person name="Dalla E."/>
            <person name="Dalrymple B.P."/>
            <person name="de Bono B."/>
            <person name="Della Gatta G."/>
            <person name="di Bernardo D."/>
            <person name="Down T."/>
            <person name="Engstrom P."/>
            <person name="Fagiolini M."/>
            <person name="Faulkner G."/>
            <person name="Fletcher C.F."/>
            <person name="Fukushima T."/>
            <person name="Furuno M."/>
            <person name="Futaki S."/>
            <person name="Gariboldi M."/>
            <person name="Georgii-Hemming P."/>
            <person name="Gingeras T.R."/>
            <person name="Gojobori T."/>
            <person name="Green R.E."/>
            <person name="Gustincich S."/>
            <person name="Harbers M."/>
            <person name="Hayashi Y."/>
            <person name="Hensch T.K."/>
            <person name="Hirokawa N."/>
            <person name="Hill D."/>
            <person name="Huminiecki L."/>
            <person name="Iacono M."/>
            <person name="Ikeo K."/>
            <person name="Iwama A."/>
            <person name="Ishikawa T."/>
            <person name="Jakt M."/>
            <person name="Kanapin A."/>
            <person name="Katoh M."/>
            <person name="Kawasawa Y."/>
            <person name="Kelso J."/>
            <person name="Kitamura H."/>
            <person name="Kitano H."/>
            <person name="Kollias G."/>
            <person name="Krishnan S.P."/>
            <person name="Kruger A."/>
            <person name="Kummerfeld S.K."/>
            <person name="Kurochkin I.V."/>
            <person name="Lareau L.F."/>
            <person name="Lazarevic D."/>
            <person name="Lipovich L."/>
            <person name="Liu J."/>
            <person name="Liuni S."/>
            <person name="McWilliam S."/>
            <person name="Madan Babu M."/>
            <person name="Madera M."/>
            <person name="Marchionni L."/>
            <person name="Matsuda H."/>
            <person name="Matsuzawa S."/>
            <person name="Miki H."/>
            <person name="Mignone F."/>
            <person name="Miyake S."/>
            <person name="Morris K."/>
            <person name="Mottagui-Tabar S."/>
            <person name="Mulder N."/>
            <person name="Nakano N."/>
            <person name="Nakauchi H."/>
            <person name="Ng P."/>
            <person name="Nilsson R."/>
            <person name="Nishiguchi S."/>
            <person name="Nishikawa S."/>
            <person name="Nori F."/>
            <person name="Ohara O."/>
            <person name="Okazaki Y."/>
            <person name="Orlando V."/>
            <person name="Pang K.C."/>
            <person name="Pavan W.J."/>
            <person name="Pavesi G."/>
            <person name="Pesole G."/>
            <person name="Petrovsky N."/>
            <person name="Piazza S."/>
            <person name="Reed J."/>
            <person name="Reid J.F."/>
            <person name="Ring B.Z."/>
            <person name="Ringwald M."/>
            <person name="Rost B."/>
            <person name="Ruan Y."/>
            <person name="Salzberg S.L."/>
            <person name="Sandelin A."/>
            <person name="Schneider C."/>
            <person name="Schoenbach C."/>
            <person name="Sekiguchi K."/>
            <person name="Semple C.A."/>
            <person name="Seno S."/>
            <person name="Sessa L."/>
            <person name="Sheng Y."/>
            <person name="Shibata Y."/>
            <person name="Shimada H."/>
            <person name="Shimada K."/>
            <person name="Silva D."/>
            <person name="Sinclair B."/>
            <person name="Sperling S."/>
            <person name="Stupka E."/>
            <person name="Sugiura K."/>
            <person name="Sultana R."/>
            <person name="Takenaka Y."/>
            <person name="Taki K."/>
            <person name="Tammoja K."/>
            <person name="Tan S.L."/>
            <person name="Tang S."/>
            <person name="Taylor M.S."/>
            <person name="Tegner J."/>
            <person name="Teichmann S.A."/>
            <person name="Ueda H.R."/>
            <person name="van Nimwegen E."/>
            <person name="Verardo R."/>
            <person name="Wei C.L."/>
            <person name="Yagi K."/>
            <person name="Yamanishi H."/>
            <person name="Zabarovsky E."/>
            <person name="Zhu S."/>
            <person name="Zimmer A."/>
            <person name="Hide W."/>
            <person name="Bult C."/>
            <person name="Grimmond S.M."/>
            <person name="Teasdale R.D."/>
            <person name="Liu E.T."/>
            <person name="Brusic V."/>
            <person name="Quackenbush J."/>
            <person name="Wahlestedt C."/>
            <person name="Mattick J.S."/>
            <person name="Hume D.A."/>
            <person name="Kai C."/>
            <person name="Sasaki D."/>
            <person name="Tomaru Y."/>
            <person name="Fukuda S."/>
            <person name="Kanamori-Katayama M."/>
            <person name="Suzuki M."/>
            <person name="Aoki J."/>
            <person name="Arakawa T."/>
            <person name="Iida J."/>
            <person name="Imamura K."/>
            <person name="Itoh M."/>
            <person name="Kato T."/>
            <person name="Kawaji H."/>
            <person name="Kawagashira N."/>
            <person name="Kawashima T."/>
            <person name="Kojima M."/>
            <person name="Kondo S."/>
            <person name="Konno H."/>
            <person name="Nakano K."/>
            <person name="Ninomiya N."/>
            <person name="Nishio T."/>
            <person name="Okada M."/>
            <person name="Plessy C."/>
            <person name="Shibata K."/>
            <person name="Shiraki T."/>
            <person name="Suzuki S."/>
            <person name="Tagami M."/>
            <person name="Waki K."/>
            <person name="Watahiki A."/>
            <person name="Okamura-Oho Y."/>
            <person name="Suzuki H."/>
            <person name="Kawai J."/>
            <person name="Hayashizaki Y."/>
        </authorList>
    </citation>
    <scope>NUCLEOTIDE SEQUENCE [LARGE SCALE MRNA]</scope>
    <source>
        <strain>C57BL/6J</strain>
        <tissue>Ovary</tissue>
    </source>
</reference>
<reference key="3">
    <citation type="submission" date="2003-05" db="EMBL/GenBank/DDBJ databases">
        <title>Genomic sequence analysis in the mouse T-complex region.</title>
        <authorList>
            <person name="Brathwaite M.E."/>
            <person name="Waeltz P."/>
            <person name="Qian Y."/>
            <person name="Dudekula D."/>
            <person name="Schlessinger D."/>
            <person name="Nagaraja R."/>
        </authorList>
    </citation>
    <scope>NUCLEOTIDE SEQUENCE [LARGE SCALE GENOMIC DNA]</scope>
    <source>
        <strain>C57BL/6J</strain>
    </source>
</reference>
<reference key="4">
    <citation type="journal article" date="2004" name="Genome Res.">
        <title>The status, quality, and expansion of the NIH full-length cDNA project: the Mammalian Gene Collection (MGC).</title>
        <authorList>
            <consortium name="The MGC Project Team"/>
        </authorList>
    </citation>
    <scope>NUCLEOTIDE SEQUENCE [LARGE SCALE MRNA]</scope>
    <source>
        <tissue>Brain</tissue>
    </source>
</reference>
<reference key="5">
    <citation type="journal article" date="2010" name="Cell">
        <title>A tissue-specific atlas of mouse protein phosphorylation and expression.</title>
        <authorList>
            <person name="Huttlin E.L."/>
            <person name="Jedrychowski M.P."/>
            <person name="Elias J.E."/>
            <person name="Goswami T."/>
            <person name="Rad R."/>
            <person name="Beausoleil S.A."/>
            <person name="Villen J."/>
            <person name="Haas W."/>
            <person name="Sowa M.E."/>
            <person name="Gygi S.P."/>
        </authorList>
    </citation>
    <scope>IDENTIFICATION BY MASS SPECTROMETRY [LARGE SCALE ANALYSIS]</scope>
    <source>
        <tissue>Brain</tissue>
        <tissue>Brown adipose tissue</tissue>
        <tissue>Heart</tissue>
        <tissue>Kidney</tissue>
        <tissue>Liver</tissue>
        <tissue>Lung</tissue>
        <tissue>Pancreas</tissue>
        <tissue>Spleen</tissue>
        <tissue>Testis</tissue>
    </source>
</reference>
<comment type="function">
    <text evidence="4">Putative O-methyltransferase.</text>
</comment>
<comment type="subunit">
    <text evidence="1">Homodimer.</text>
</comment>
<comment type="subcellular location">
    <subcellularLocation>
        <location evidence="4">Membrane</location>
        <topology evidence="4">Single-pass type II membrane protein</topology>
    </subcellularLocation>
</comment>
<comment type="similarity">
    <text evidence="3">Belongs to the class I-like SAM-binding methyltransferase superfamily. Cation-dependent O-methyltransferase family.</text>
</comment>
<sequence length="262" mass="28961">MAQPVPRLSIPAALALGSAALGAAFATGLLLGKRWPPWGSRRQERLLPPEDNPLWQYLLSRSMREHPALRSLRLLTLEQPQGDSMMTCEQAQLLANLARLIKAKKALDLGTFTGYSALALALALPEAGRVVTCEVDAEPPKLGRPMWKQAEVEQKIDLRLQPALQTLDELLAAGEAGTFDIAVVDADKENCTAYYERCLQLLRPGGVLAVLRVLWRGEVLQPQPRNKTVECVRNLNERILRDARVYISLLPLDDGLSLAFKI</sequence>
<gene>
    <name type="primary">Comtd1</name>
</gene>
<dbReference type="EC" id="2.1.1.-"/>
<dbReference type="EMBL" id="CT010388">
    <property type="protein sequence ID" value="CAJ18595.1"/>
    <property type="molecule type" value="mRNA"/>
</dbReference>
<dbReference type="EMBL" id="AK054334">
    <property type="protein sequence ID" value="BAC35735.1"/>
    <property type="molecule type" value="mRNA"/>
</dbReference>
<dbReference type="EMBL" id="AY294423">
    <property type="protein sequence ID" value="AAQ01517.1"/>
    <property type="molecule type" value="Genomic_DNA"/>
</dbReference>
<dbReference type="EMBL" id="BC049670">
    <property type="protein sequence ID" value="AAH49670.1"/>
    <property type="molecule type" value="mRNA"/>
</dbReference>
<dbReference type="CCDS" id="CCDS26868.1"/>
<dbReference type="RefSeq" id="NP_081241.1">
    <property type="nucleotide sequence ID" value="NM_026965.2"/>
</dbReference>
<dbReference type="SMR" id="Q8BIG7"/>
<dbReference type="FunCoup" id="Q8BIG7">
    <property type="interactions" value="860"/>
</dbReference>
<dbReference type="STRING" id="10090.ENSMUSP00000119330"/>
<dbReference type="GlyGen" id="Q8BIG7">
    <property type="glycosylation" value="1 site, 1 N-linked glycan (1 site)"/>
</dbReference>
<dbReference type="iPTMnet" id="Q8BIG7"/>
<dbReference type="PhosphoSitePlus" id="Q8BIG7"/>
<dbReference type="SwissPalm" id="Q8BIG7"/>
<dbReference type="jPOST" id="Q8BIG7"/>
<dbReference type="PaxDb" id="10090-ENSMUSP00000119330"/>
<dbReference type="PeptideAtlas" id="Q8BIG7"/>
<dbReference type="ProteomicsDB" id="283536"/>
<dbReference type="Pumba" id="Q8BIG7"/>
<dbReference type="Antibodypedia" id="29691">
    <property type="antibodies" value="76 antibodies from 21 providers"/>
</dbReference>
<dbReference type="DNASU" id="69156"/>
<dbReference type="Ensembl" id="ENSMUST00000124549.9">
    <property type="protein sequence ID" value="ENSMUSP00000119330.2"/>
    <property type="gene ID" value="ENSMUSG00000021773.12"/>
</dbReference>
<dbReference type="GeneID" id="69156"/>
<dbReference type="KEGG" id="mmu:69156"/>
<dbReference type="UCSC" id="uc007slt.1">
    <property type="organism name" value="mouse"/>
</dbReference>
<dbReference type="AGR" id="MGI:1916406"/>
<dbReference type="CTD" id="118881"/>
<dbReference type="MGI" id="MGI:1916406">
    <property type="gene designation" value="Comtd1"/>
</dbReference>
<dbReference type="VEuPathDB" id="HostDB:ENSMUSG00000021773"/>
<dbReference type="eggNOG" id="KOG1663">
    <property type="taxonomic scope" value="Eukaryota"/>
</dbReference>
<dbReference type="GeneTree" id="ENSGT00390000004409"/>
<dbReference type="HOGENOM" id="CLU_067676_5_3_1"/>
<dbReference type="InParanoid" id="Q8BIG7"/>
<dbReference type="OMA" id="PYDMIFI"/>
<dbReference type="OrthoDB" id="10251242at2759"/>
<dbReference type="PhylomeDB" id="Q8BIG7"/>
<dbReference type="TreeFam" id="TF312986"/>
<dbReference type="BioGRID-ORCS" id="69156">
    <property type="hits" value="4 hits in 77 CRISPR screens"/>
</dbReference>
<dbReference type="PRO" id="PR:Q8BIG7"/>
<dbReference type="Proteomes" id="UP000000589">
    <property type="component" value="Chromosome 14"/>
</dbReference>
<dbReference type="RNAct" id="Q8BIG7">
    <property type="molecule type" value="protein"/>
</dbReference>
<dbReference type="Bgee" id="ENSMUSG00000021773">
    <property type="expression patterns" value="Expressed in ileal epithelium and 241 other cell types or tissues"/>
</dbReference>
<dbReference type="ExpressionAtlas" id="Q8BIG7">
    <property type="expression patterns" value="baseline and differential"/>
</dbReference>
<dbReference type="GO" id="GO:0016020">
    <property type="term" value="C:membrane"/>
    <property type="evidence" value="ECO:0007669"/>
    <property type="project" value="UniProtKB-SubCell"/>
</dbReference>
<dbReference type="GO" id="GO:0005739">
    <property type="term" value="C:mitochondrion"/>
    <property type="evidence" value="ECO:0007005"/>
    <property type="project" value="MGI"/>
</dbReference>
<dbReference type="GO" id="GO:0008171">
    <property type="term" value="F:O-methyltransferase activity"/>
    <property type="evidence" value="ECO:0007669"/>
    <property type="project" value="InterPro"/>
</dbReference>
<dbReference type="GO" id="GO:0032259">
    <property type="term" value="P:methylation"/>
    <property type="evidence" value="ECO:0007669"/>
    <property type="project" value="UniProtKB-KW"/>
</dbReference>
<dbReference type="CDD" id="cd02440">
    <property type="entry name" value="AdoMet_MTases"/>
    <property type="match status" value="1"/>
</dbReference>
<dbReference type="FunFam" id="3.40.50.150:FF:000823">
    <property type="entry name" value="Catechol O-methyltransferase domain-containing protein 1"/>
    <property type="match status" value="1"/>
</dbReference>
<dbReference type="Gene3D" id="3.40.50.150">
    <property type="entry name" value="Vaccinia Virus protein VP39"/>
    <property type="match status" value="1"/>
</dbReference>
<dbReference type="InterPro" id="IPR050362">
    <property type="entry name" value="Cation-dep_OMT"/>
</dbReference>
<dbReference type="InterPro" id="IPR029063">
    <property type="entry name" value="SAM-dependent_MTases_sf"/>
</dbReference>
<dbReference type="InterPro" id="IPR002935">
    <property type="entry name" value="SAM_O-MeTrfase"/>
</dbReference>
<dbReference type="PANTHER" id="PTHR10509:SF93">
    <property type="entry name" value="CATECHOL O-METHYLTRANSFERASE DOMAIN-CONTAINING PROTEIN 1"/>
    <property type="match status" value="1"/>
</dbReference>
<dbReference type="PANTHER" id="PTHR10509">
    <property type="entry name" value="O-METHYLTRANSFERASE-RELATED"/>
    <property type="match status" value="1"/>
</dbReference>
<dbReference type="Pfam" id="PF01596">
    <property type="entry name" value="Methyltransf_3"/>
    <property type="match status" value="1"/>
</dbReference>
<dbReference type="SUPFAM" id="SSF53335">
    <property type="entry name" value="S-adenosyl-L-methionine-dependent methyltransferases"/>
    <property type="match status" value="1"/>
</dbReference>
<dbReference type="PROSITE" id="PS51682">
    <property type="entry name" value="SAM_OMT_I"/>
    <property type="match status" value="1"/>
</dbReference>
<proteinExistence type="evidence at protein level"/>
<organism>
    <name type="scientific">Mus musculus</name>
    <name type="common">Mouse</name>
    <dbReference type="NCBI Taxonomy" id="10090"/>
    <lineage>
        <taxon>Eukaryota</taxon>
        <taxon>Metazoa</taxon>
        <taxon>Chordata</taxon>
        <taxon>Craniata</taxon>
        <taxon>Vertebrata</taxon>
        <taxon>Euteleostomi</taxon>
        <taxon>Mammalia</taxon>
        <taxon>Eutheria</taxon>
        <taxon>Euarchontoglires</taxon>
        <taxon>Glires</taxon>
        <taxon>Rodentia</taxon>
        <taxon>Myomorpha</taxon>
        <taxon>Muroidea</taxon>
        <taxon>Muridae</taxon>
        <taxon>Murinae</taxon>
        <taxon>Mus</taxon>
        <taxon>Mus</taxon>
    </lineage>
</organism>
<protein>
    <recommendedName>
        <fullName>Catechol O-methyltransferase domain-containing protein 1</fullName>
        <ecNumber>2.1.1.-</ecNumber>
    </recommendedName>
</protein>
<evidence type="ECO:0000250" key="1"/>
<evidence type="ECO:0000255" key="2"/>
<evidence type="ECO:0000255" key="3">
    <source>
        <dbReference type="PROSITE-ProRule" id="PRU01019"/>
    </source>
</evidence>
<evidence type="ECO:0000305" key="4"/>
<keyword id="KW-0472">Membrane</keyword>
<keyword id="KW-0489">Methyltransferase</keyword>
<keyword id="KW-1185">Reference proteome</keyword>
<keyword id="KW-0949">S-adenosyl-L-methionine</keyword>
<keyword id="KW-0735">Signal-anchor</keyword>
<keyword id="KW-0808">Transferase</keyword>
<keyword id="KW-0812">Transmembrane</keyword>
<keyword id="KW-1133">Transmembrane helix</keyword>
<accession>Q8BIG7</accession>
<name>CMTD1_MOUSE</name>